<accession>F1LU71</accession>
<feature type="transit peptide" description="Mitochondrion" evidence="1">
    <location>
        <begin position="1"/>
        <end position="43"/>
    </location>
</feature>
<feature type="chain" id="PRO_0000442770" description="Methylglutaconyl-CoA hydratase, mitochondrial">
    <location>
        <begin position="44"/>
        <end position="315"/>
    </location>
</feature>
<feature type="region of interest" description="RNA-binding" evidence="1">
    <location>
        <begin position="81"/>
        <end position="95"/>
    </location>
</feature>
<feature type="modified residue" description="N6-acetyllysine; alternate" evidence="2">
    <location>
        <position position="76"/>
    </location>
</feature>
<feature type="modified residue" description="N6-succinyllysine; alternate" evidence="2">
    <location>
        <position position="76"/>
    </location>
</feature>
<feature type="modified residue" description="N6-succinyllysine" evidence="2">
    <location>
        <position position="85"/>
    </location>
</feature>
<feature type="modified residue" description="N6-acetyllysine; alternate" evidence="2">
    <location>
        <position position="89"/>
    </location>
</feature>
<feature type="modified residue" description="N6-succinyllysine; alternate" evidence="2">
    <location>
        <position position="89"/>
    </location>
</feature>
<feature type="modified residue" description="N6-acetyllysine; alternate" evidence="2">
    <location>
        <position position="120"/>
    </location>
</feature>
<feature type="modified residue" description="N6-succinyllysine; alternate" evidence="2">
    <location>
        <position position="120"/>
    </location>
</feature>
<feature type="modified residue" description="N6-succinyllysine" evidence="2">
    <location>
        <position position="124"/>
    </location>
</feature>
<feature type="modified residue" description="N6-succinyllysine" evidence="2">
    <location>
        <position position="136"/>
    </location>
</feature>
<feature type="modified residue" description="N6-acetyllysine; alternate" evidence="2">
    <location>
        <position position="180"/>
    </location>
</feature>
<feature type="modified residue" description="N6-succinyllysine; alternate" evidence="2">
    <location>
        <position position="180"/>
    </location>
</feature>
<feature type="modified residue" description="N6-acetyllysine; alternate" evidence="2">
    <location>
        <position position="187"/>
    </location>
</feature>
<feature type="modified residue" description="N6-succinyllysine; alternate" evidence="2">
    <location>
        <position position="187"/>
    </location>
</feature>
<feature type="modified residue" description="N6-succinyllysine" evidence="2">
    <location>
        <position position="305"/>
    </location>
</feature>
<name>AUHM_RAT</name>
<proteinExistence type="evidence at protein level"/>
<dbReference type="EC" id="4.2.1.18" evidence="1"/>
<dbReference type="EC" id="4.2.1.56" evidence="3"/>
<dbReference type="EMBL" id="AABR07027053">
    <property type="status" value="NOT_ANNOTATED_CDS"/>
    <property type="molecule type" value="Genomic_DNA"/>
</dbReference>
<dbReference type="EMBL" id="AABR07027054">
    <property type="status" value="NOT_ANNOTATED_CDS"/>
    <property type="molecule type" value="Genomic_DNA"/>
</dbReference>
<dbReference type="EMBL" id="AABR07027055">
    <property type="status" value="NOT_ANNOTATED_CDS"/>
    <property type="molecule type" value="Genomic_DNA"/>
</dbReference>
<dbReference type="EMBL" id="CH473977">
    <property type="protein sequence ID" value="EDL98065.1"/>
    <property type="molecule type" value="Genomic_DNA"/>
</dbReference>
<dbReference type="RefSeq" id="NP_001386179.1">
    <property type="nucleotide sequence ID" value="NM_001399250.1"/>
</dbReference>
<dbReference type="RefSeq" id="XP_006253736.1">
    <property type="nucleotide sequence ID" value="XM_006253674.3"/>
</dbReference>
<dbReference type="SMR" id="F1LU71"/>
<dbReference type="FunCoup" id="F1LU71">
    <property type="interactions" value="1599"/>
</dbReference>
<dbReference type="IntAct" id="F1LU71">
    <property type="interactions" value="6"/>
</dbReference>
<dbReference type="STRING" id="10116.ENSRNOP00000015786"/>
<dbReference type="PhosphoSitePlus" id="F1LU71"/>
<dbReference type="jPOST" id="F1LU71"/>
<dbReference type="PaxDb" id="10116-ENSRNOP00000015786"/>
<dbReference type="Ensembl" id="ENSRNOT00000015786.8">
    <property type="protein sequence ID" value="ENSRNOP00000015786.5"/>
    <property type="gene ID" value="ENSRNOG00000011684.8"/>
</dbReference>
<dbReference type="GeneID" id="361215"/>
<dbReference type="AGR" id="RGD:1306087"/>
<dbReference type="RGD" id="1306087">
    <property type="gene designation" value="Auh"/>
</dbReference>
<dbReference type="eggNOG" id="KOG1679">
    <property type="taxonomic scope" value="Eukaryota"/>
</dbReference>
<dbReference type="GeneTree" id="ENSGT00940000157484"/>
<dbReference type="HOGENOM" id="CLU_009834_7_6_1"/>
<dbReference type="InParanoid" id="F1LU71"/>
<dbReference type="OMA" id="YEQAHAW"/>
<dbReference type="TreeFam" id="TF314276"/>
<dbReference type="Reactome" id="R-RNO-70895">
    <property type="pathway name" value="Branched-chain amino acid catabolism"/>
</dbReference>
<dbReference type="UniPathway" id="UPA00363">
    <property type="reaction ID" value="UER00862"/>
</dbReference>
<dbReference type="PRO" id="PR:F1LU71"/>
<dbReference type="Proteomes" id="UP000002494">
    <property type="component" value="Chromosome 17"/>
</dbReference>
<dbReference type="Proteomes" id="UP000234681">
    <property type="component" value="Chromosome 17"/>
</dbReference>
<dbReference type="Bgee" id="ENSRNOG00000011684">
    <property type="expression patterns" value="Expressed in cerebellum and 19 other cell types or tissues"/>
</dbReference>
<dbReference type="GO" id="GO:0005739">
    <property type="term" value="C:mitochondrion"/>
    <property type="evidence" value="ECO:0000266"/>
    <property type="project" value="RGD"/>
</dbReference>
<dbReference type="GO" id="GO:0004300">
    <property type="term" value="F:enoyl-CoA hydratase activity"/>
    <property type="evidence" value="ECO:0000266"/>
    <property type="project" value="RGD"/>
</dbReference>
<dbReference type="GO" id="GO:0050011">
    <property type="term" value="F:itaconyl-CoA hydratase activity"/>
    <property type="evidence" value="ECO:0007669"/>
    <property type="project" value="UniProtKB-EC"/>
</dbReference>
<dbReference type="GO" id="GO:0004490">
    <property type="term" value="F:methylglutaconyl-CoA hydratase activity"/>
    <property type="evidence" value="ECO:0000266"/>
    <property type="project" value="RGD"/>
</dbReference>
<dbReference type="GO" id="GO:0003730">
    <property type="term" value="F:mRNA 3'-UTR binding"/>
    <property type="evidence" value="ECO:0000266"/>
    <property type="project" value="RGD"/>
</dbReference>
<dbReference type="GO" id="GO:0003723">
    <property type="term" value="F:RNA binding"/>
    <property type="evidence" value="ECO:0000266"/>
    <property type="project" value="RGD"/>
</dbReference>
<dbReference type="GO" id="GO:0006635">
    <property type="term" value="P:fatty acid beta-oxidation"/>
    <property type="evidence" value="ECO:0000318"/>
    <property type="project" value="GO_Central"/>
</dbReference>
<dbReference type="GO" id="GO:0006552">
    <property type="term" value="P:L-leucine catabolic process"/>
    <property type="evidence" value="ECO:0007669"/>
    <property type="project" value="UniProtKB-UniPathway"/>
</dbReference>
<dbReference type="CDD" id="cd06558">
    <property type="entry name" value="crotonase-like"/>
    <property type="match status" value="1"/>
</dbReference>
<dbReference type="FunFam" id="3.90.226.10:FF:000022">
    <property type="entry name" value="methylglutaconyl-CoA hydratase, mitochondrial isoform X1"/>
    <property type="match status" value="1"/>
</dbReference>
<dbReference type="FunFam" id="1.10.12.10:FF:000001">
    <property type="entry name" value="Probable enoyl-CoA hydratase, mitochondrial"/>
    <property type="match status" value="1"/>
</dbReference>
<dbReference type="Gene3D" id="3.90.226.10">
    <property type="entry name" value="2-enoyl-CoA Hydratase, Chain A, domain 1"/>
    <property type="match status" value="1"/>
</dbReference>
<dbReference type="Gene3D" id="1.10.12.10">
    <property type="entry name" value="Lyase 2-enoyl-coa Hydratase, Chain A, domain 2"/>
    <property type="match status" value="1"/>
</dbReference>
<dbReference type="InterPro" id="IPR029045">
    <property type="entry name" value="ClpP/crotonase-like_dom_sf"/>
</dbReference>
<dbReference type="InterPro" id="IPR018376">
    <property type="entry name" value="Enoyl-CoA_hyd/isom_CS"/>
</dbReference>
<dbReference type="InterPro" id="IPR001753">
    <property type="entry name" value="Enoyl-CoA_hydra/iso"/>
</dbReference>
<dbReference type="InterPro" id="IPR014748">
    <property type="entry name" value="Enoyl-CoA_hydra_C"/>
</dbReference>
<dbReference type="PANTHER" id="PTHR11941">
    <property type="entry name" value="ENOYL-COA HYDRATASE-RELATED"/>
    <property type="match status" value="1"/>
</dbReference>
<dbReference type="PANTHER" id="PTHR11941:SF12">
    <property type="entry name" value="METHYLGLUTACONYL-COA HYDRATASE, MITOCHONDRIAL"/>
    <property type="match status" value="1"/>
</dbReference>
<dbReference type="Pfam" id="PF00378">
    <property type="entry name" value="ECH_1"/>
    <property type="match status" value="1"/>
</dbReference>
<dbReference type="SUPFAM" id="SSF52096">
    <property type="entry name" value="ClpP/crotonase"/>
    <property type="match status" value="1"/>
</dbReference>
<dbReference type="PROSITE" id="PS00166">
    <property type="entry name" value="ENOYL_COA_HYDRATASE"/>
    <property type="match status" value="1"/>
</dbReference>
<evidence type="ECO:0000250" key="1">
    <source>
        <dbReference type="UniProtKB" id="Q13825"/>
    </source>
</evidence>
<evidence type="ECO:0000250" key="2">
    <source>
        <dbReference type="UniProtKB" id="Q9JLZ3"/>
    </source>
</evidence>
<evidence type="ECO:0000303" key="3">
    <source>
    </source>
</evidence>
<evidence type="ECO:0000305" key="4"/>
<evidence type="ECO:0000312" key="5">
    <source>
        <dbReference type="RGD" id="1306087"/>
    </source>
</evidence>
<keyword id="KW-0007">Acetylation</keyword>
<keyword id="KW-0101">Branched-chain amino acid catabolism</keyword>
<keyword id="KW-0456">Lyase</keyword>
<keyword id="KW-0496">Mitochondrion</keyword>
<keyword id="KW-1185">Reference proteome</keyword>
<keyword id="KW-0694">RNA-binding</keyword>
<keyword id="KW-0809">Transit peptide</keyword>
<comment type="function">
    <text evidence="1 3">Catalyzes the fifth step in the leucine degradation pathway, the reversible hydration of 3-methylglutaconyl-CoA (3-MG-CoA) to 3-hydroxy-3-methylglutaryl-CoA (HMG-CoA). Can catalyze the reverse reaction but at a much lower rate in vitro. HMG-CoA is then quickly degraded by another enzyme (such as HMG-CoA lyase) to give acetyl-CoA and acetoacetate. Uses other substrates such as (2E)-glutaconyl-CoA efficiently in vitro, and to a lesser extent 3-methylcrotonyl-CoA (3-methyl-(2E)-butenoyl-CoA), crotonyl-CoA ((2E)-butenoyl-CoA) and 3-hydroxybutanoyl-CoA (the missing carboxylate reduces affinity to the active site). Originally it was identified as an RNA-binding protein as it binds to AU-rich elements (AREs) in vitro. AREs direct rapid RNA degradation and mRNA deadenylation (By similarity). Might have itaconyl-CoA hydratase activity, converting itaconyl-CoA into citramalyl-CoA in the C5-dicarboxylate catabolism pathway. The C5-dicarboxylate catabolism pathway is required to detoxify itaconate, an antimicrobial metabolite and immunomodulator produced by macrophages during certain infections, that can act as a vitamin B12-poisoning metabolite (PubMed:13783048).</text>
</comment>
<comment type="catalytic activity">
    <reaction evidence="1">
        <text>(3S)-3-hydroxy-3-methylglutaryl-CoA = 3-methyl-(2E)-glutaconyl-CoA + H2O</text>
        <dbReference type="Rhea" id="RHEA:21536"/>
        <dbReference type="ChEBI" id="CHEBI:15377"/>
        <dbReference type="ChEBI" id="CHEBI:43074"/>
        <dbReference type="ChEBI" id="CHEBI:57346"/>
        <dbReference type="EC" id="4.2.1.18"/>
    </reaction>
    <physiologicalReaction direction="right-to-left" evidence="1">
        <dbReference type="Rhea" id="RHEA:21538"/>
    </physiologicalReaction>
</comment>
<comment type="catalytic activity">
    <reaction evidence="3">
        <text>(3S)-citramalyl-CoA = itaconyl-CoA + H2O</text>
        <dbReference type="Rhea" id="RHEA:13785"/>
        <dbReference type="ChEBI" id="CHEBI:15377"/>
        <dbReference type="ChEBI" id="CHEBI:57381"/>
        <dbReference type="ChEBI" id="CHEBI:58668"/>
        <dbReference type="EC" id="4.2.1.56"/>
    </reaction>
    <physiologicalReaction direction="right-to-left" evidence="3">
        <dbReference type="Rhea" id="RHEA:13787"/>
    </physiologicalReaction>
</comment>
<comment type="catalytic activity">
    <reaction evidence="1">
        <text>3-hydroxyisovaleryl-CoA = 3-methylbut-2-enoyl-CoA + H2O</text>
        <dbReference type="Rhea" id="RHEA:31079"/>
        <dbReference type="ChEBI" id="CHEBI:15377"/>
        <dbReference type="ChEBI" id="CHEBI:57344"/>
        <dbReference type="ChEBI" id="CHEBI:62555"/>
    </reaction>
    <physiologicalReaction direction="right-to-left" evidence="1">
        <dbReference type="Rhea" id="RHEA:31081"/>
    </physiologicalReaction>
</comment>
<comment type="catalytic activity">
    <reaction evidence="1">
        <text>(S)-3-hydroxyglutaryl-CoA = (2E)-glutaconyl-CoA + H2O</text>
        <dbReference type="Rhea" id="RHEA:68456"/>
        <dbReference type="ChEBI" id="CHEBI:15377"/>
        <dbReference type="ChEBI" id="CHEBI:57353"/>
        <dbReference type="ChEBI" id="CHEBI:177916"/>
    </reaction>
    <physiologicalReaction direction="right-to-left" evidence="1">
        <dbReference type="Rhea" id="RHEA:68458"/>
    </physiologicalReaction>
</comment>
<comment type="pathway">
    <text evidence="1">Amino-acid degradation; L-leucine degradation; (S)-3-hydroxy-3-methylglutaryl-CoA from 3-isovaleryl-CoA: step 3/3.</text>
</comment>
<comment type="subunit">
    <text evidence="1">Homohexamer.</text>
</comment>
<comment type="subcellular location">
    <subcellularLocation>
        <location evidence="2">Mitochondrion</location>
    </subcellularLocation>
</comment>
<comment type="similarity">
    <text evidence="4">Belongs to the enoyl-CoA hydratase/isomerase family.</text>
</comment>
<gene>
    <name evidence="5" type="primary">Auh</name>
</gene>
<sequence>MAAAAAPGALGALSAGRVRLVAACCARLGSAAWARGTAPRRGYSSEVKTEDELRVRHLEEENRGIVVLGINRAYGKNSLSKNLLKMLSKAVDALKSDKKVRTIIIRSEVPGIFCAGADLKERAKMHSSEVGPFVSKIRAVINDIANLPVPTIAAIDGLALGGGLELALACDIRVAASSAKMGLVETKLAIIPGGGGTQRLPRAIGMALAKELIFSARVLDGQEAKAVGLISHVLEQNQEGDAAYRKALDLAREFLPQGPVAMRVAKLAINQGMEVDLVTGLAIEEACYAQTISTKDRLEGLLAFKEKRPPRYKGE</sequence>
<protein>
    <recommendedName>
        <fullName>Methylglutaconyl-CoA hydratase, mitochondrial</fullName>
        <shortName>3-MG-CoA hydratase</shortName>
        <ecNumber evidence="1">4.2.1.18</ecNumber>
    </recommendedName>
    <alternativeName>
        <fullName>AU-specific RNA-binding enoyl-CoA hydratase</fullName>
        <shortName>AU-binding enoyl-CoA hydratase</shortName>
    </alternativeName>
    <alternativeName>
        <fullName>Itaconyl-CoA hydratase</fullName>
        <ecNumber evidence="3">4.2.1.56</ecNumber>
    </alternativeName>
</protein>
<organism>
    <name type="scientific">Rattus norvegicus</name>
    <name type="common">Rat</name>
    <dbReference type="NCBI Taxonomy" id="10116"/>
    <lineage>
        <taxon>Eukaryota</taxon>
        <taxon>Metazoa</taxon>
        <taxon>Chordata</taxon>
        <taxon>Craniata</taxon>
        <taxon>Vertebrata</taxon>
        <taxon>Euteleostomi</taxon>
        <taxon>Mammalia</taxon>
        <taxon>Eutheria</taxon>
        <taxon>Euarchontoglires</taxon>
        <taxon>Glires</taxon>
        <taxon>Rodentia</taxon>
        <taxon>Myomorpha</taxon>
        <taxon>Muroidea</taxon>
        <taxon>Muridae</taxon>
        <taxon>Murinae</taxon>
        <taxon>Rattus</taxon>
    </lineage>
</organism>
<reference key="1">
    <citation type="journal article" date="2004" name="Nature">
        <title>Genome sequence of the Brown Norway rat yields insights into mammalian evolution.</title>
        <authorList>
            <person name="Gibbs R.A."/>
            <person name="Weinstock G.M."/>
            <person name="Metzker M.L."/>
            <person name="Muzny D.M."/>
            <person name="Sodergren E.J."/>
            <person name="Scherer S."/>
            <person name="Scott G."/>
            <person name="Steffen D."/>
            <person name="Worley K.C."/>
            <person name="Burch P.E."/>
            <person name="Okwuonu G."/>
            <person name="Hines S."/>
            <person name="Lewis L."/>
            <person name="Deramo C."/>
            <person name="Delgado O."/>
            <person name="Dugan-Rocha S."/>
            <person name="Miner G."/>
            <person name="Morgan M."/>
            <person name="Hawes A."/>
            <person name="Gill R."/>
            <person name="Holt R.A."/>
            <person name="Adams M.D."/>
            <person name="Amanatides P.G."/>
            <person name="Baden-Tillson H."/>
            <person name="Barnstead M."/>
            <person name="Chin S."/>
            <person name="Evans C.A."/>
            <person name="Ferriera S."/>
            <person name="Fosler C."/>
            <person name="Glodek A."/>
            <person name="Gu Z."/>
            <person name="Jennings D."/>
            <person name="Kraft C.L."/>
            <person name="Nguyen T."/>
            <person name="Pfannkoch C.M."/>
            <person name="Sitter C."/>
            <person name="Sutton G.G."/>
            <person name="Venter J.C."/>
            <person name="Woodage T."/>
            <person name="Smith D."/>
            <person name="Lee H.-M."/>
            <person name="Gustafson E."/>
            <person name="Cahill P."/>
            <person name="Kana A."/>
            <person name="Doucette-Stamm L."/>
            <person name="Weinstock K."/>
            <person name="Fechtel K."/>
            <person name="Weiss R.B."/>
            <person name="Dunn D.M."/>
            <person name="Green E.D."/>
            <person name="Blakesley R.W."/>
            <person name="Bouffard G.G."/>
            <person name="De Jong P.J."/>
            <person name="Osoegawa K."/>
            <person name="Zhu B."/>
            <person name="Marra M."/>
            <person name="Schein J."/>
            <person name="Bosdet I."/>
            <person name="Fjell C."/>
            <person name="Jones S."/>
            <person name="Krzywinski M."/>
            <person name="Mathewson C."/>
            <person name="Siddiqui A."/>
            <person name="Wye N."/>
            <person name="McPherson J."/>
            <person name="Zhao S."/>
            <person name="Fraser C.M."/>
            <person name="Shetty J."/>
            <person name="Shatsman S."/>
            <person name="Geer K."/>
            <person name="Chen Y."/>
            <person name="Abramzon S."/>
            <person name="Nierman W.C."/>
            <person name="Havlak P.H."/>
            <person name="Chen R."/>
            <person name="Durbin K.J."/>
            <person name="Egan A."/>
            <person name="Ren Y."/>
            <person name="Song X.-Z."/>
            <person name="Li B."/>
            <person name="Liu Y."/>
            <person name="Qin X."/>
            <person name="Cawley S."/>
            <person name="Cooney A.J."/>
            <person name="D'Souza L.M."/>
            <person name="Martin K."/>
            <person name="Wu J.Q."/>
            <person name="Gonzalez-Garay M.L."/>
            <person name="Jackson A.R."/>
            <person name="Kalafus K.J."/>
            <person name="McLeod M.P."/>
            <person name="Milosavljevic A."/>
            <person name="Virk D."/>
            <person name="Volkov A."/>
            <person name="Wheeler D.A."/>
            <person name="Zhang Z."/>
            <person name="Bailey J.A."/>
            <person name="Eichler E.E."/>
            <person name="Tuzun E."/>
            <person name="Birney E."/>
            <person name="Mongin E."/>
            <person name="Ureta-Vidal A."/>
            <person name="Woodwark C."/>
            <person name="Zdobnov E."/>
            <person name="Bork P."/>
            <person name="Suyama M."/>
            <person name="Torrents D."/>
            <person name="Alexandersson M."/>
            <person name="Trask B.J."/>
            <person name="Young J.M."/>
            <person name="Huang H."/>
            <person name="Wang H."/>
            <person name="Xing H."/>
            <person name="Daniels S."/>
            <person name="Gietzen D."/>
            <person name="Schmidt J."/>
            <person name="Stevens K."/>
            <person name="Vitt U."/>
            <person name="Wingrove J."/>
            <person name="Camara F."/>
            <person name="Mar Alba M."/>
            <person name="Abril J.F."/>
            <person name="Guigo R."/>
            <person name="Smit A."/>
            <person name="Dubchak I."/>
            <person name="Rubin E.M."/>
            <person name="Couronne O."/>
            <person name="Poliakov A."/>
            <person name="Huebner N."/>
            <person name="Ganten D."/>
            <person name="Goesele C."/>
            <person name="Hummel O."/>
            <person name="Kreitler T."/>
            <person name="Lee Y.-A."/>
            <person name="Monti J."/>
            <person name="Schulz H."/>
            <person name="Zimdahl H."/>
            <person name="Himmelbauer H."/>
            <person name="Lehrach H."/>
            <person name="Jacob H.J."/>
            <person name="Bromberg S."/>
            <person name="Gullings-Handley J."/>
            <person name="Jensen-Seaman M.I."/>
            <person name="Kwitek A.E."/>
            <person name="Lazar J."/>
            <person name="Pasko D."/>
            <person name="Tonellato P.J."/>
            <person name="Twigger S."/>
            <person name="Ponting C.P."/>
            <person name="Duarte J.M."/>
            <person name="Rice S."/>
            <person name="Goodstadt L."/>
            <person name="Beatson S.A."/>
            <person name="Emes R.D."/>
            <person name="Winter E.E."/>
            <person name="Webber C."/>
            <person name="Brandt P."/>
            <person name="Nyakatura G."/>
            <person name="Adetobi M."/>
            <person name="Chiaromonte F."/>
            <person name="Elnitski L."/>
            <person name="Eswara P."/>
            <person name="Hardison R.C."/>
            <person name="Hou M."/>
            <person name="Kolbe D."/>
            <person name="Makova K."/>
            <person name="Miller W."/>
            <person name="Nekrutenko A."/>
            <person name="Riemer C."/>
            <person name="Schwartz S."/>
            <person name="Taylor J."/>
            <person name="Yang S."/>
            <person name="Zhang Y."/>
            <person name="Lindpaintner K."/>
            <person name="Andrews T.D."/>
            <person name="Caccamo M."/>
            <person name="Clamp M."/>
            <person name="Clarke L."/>
            <person name="Curwen V."/>
            <person name="Durbin R.M."/>
            <person name="Eyras E."/>
            <person name="Searle S.M."/>
            <person name="Cooper G.M."/>
            <person name="Batzoglou S."/>
            <person name="Brudno M."/>
            <person name="Sidow A."/>
            <person name="Stone E.A."/>
            <person name="Payseur B.A."/>
            <person name="Bourque G."/>
            <person name="Lopez-Otin C."/>
            <person name="Puente X.S."/>
            <person name="Chakrabarti K."/>
            <person name="Chatterji S."/>
            <person name="Dewey C."/>
            <person name="Pachter L."/>
            <person name="Bray N."/>
            <person name="Yap V.B."/>
            <person name="Caspi A."/>
            <person name="Tesler G."/>
            <person name="Pevzner P.A."/>
            <person name="Haussler D."/>
            <person name="Roskin K.M."/>
            <person name="Baertsch R."/>
            <person name="Clawson H."/>
            <person name="Furey T.S."/>
            <person name="Hinrichs A.S."/>
            <person name="Karolchik D."/>
            <person name="Kent W.J."/>
            <person name="Rosenbloom K.R."/>
            <person name="Trumbower H."/>
            <person name="Weirauch M."/>
            <person name="Cooper D.N."/>
            <person name="Stenson P.D."/>
            <person name="Ma B."/>
            <person name="Brent M."/>
            <person name="Arumugam M."/>
            <person name="Shteynberg D."/>
            <person name="Copley R.R."/>
            <person name="Taylor M.S."/>
            <person name="Riethman H."/>
            <person name="Mudunuri U."/>
            <person name="Peterson J."/>
            <person name="Guyer M."/>
            <person name="Felsenfeld A."/>
            <person name="Old S."/>
            <person name="Mockrin S."/>
            <person name="Collins F.S."/>
        </authorList>
    </citation>
    <scope>NUCLEOTIDE SEQUENCE [LARGE SCALE GENOMIC DNA]</scope>
    <source>
        <strain>Brown Norway</strain>
    </source>
</reference>
<reference key="2">
    <citation type="submission" date="2005-07" db="EMBL/GenBank/DDBJ databases">
        <authorList>
            <person name="Mural R.J."/>
            <person name="Adams M.D."/>
            <person name="Myers E.W."/>
            <person name="Smith H.O."/>
            <person name="Venter J.C."/>
        </authorList>
    </citation>
    <scope>NUCLEOTIDE SEQUENCE [LARGE SCALE GENOMIC DNA]</scope>
</reference>
<reference key="3">
    <citation type="journal article" date="1961" name="J. Biol. Chem.">
        <title>The pathway of itaconate metabolism by liver mitochondria.</title>
        <authorList>
            <person name="Wang S.F."/>
            <person name="Adler J."/>
            <person name="Lardy H.A."/>
        </authorList>
    </citation>
    <scope>FUNCTION</scope>
    <scope>CATALYTIC ACTIVITY</scope>
</reference>